<gene>
    <name evidence="1" type="primary">nrdR</name>
    <name type="ordered locus">ERGA_CDS_01200</name>
</gene>
<evidence type="ECO:0000255" key="1">
    <source>
        <dbReference type="HAMAP-Rule" id="MF_00440"/>
    </source>
</evidence>
<reference key="1">
    <citation type="journal article" date="2006" name="J. Bacteriol.">
        <title>Comparative genomic analysis of three strains of Ehrlichia ruminantium reveals an active process of genome size plasticity.</title>
        <authorList>
            <person name="Frutos R."/>
            <person name="Viari A."/>
            <person name="Ferraz C."/>
            <person name="Morgat A."/>
            <person name="Eychenie S."/>
            <person name="Kandassamy Y."/>
            <person name="Chantal I."/>
            <person name="Bensaid A."/>
            <person name="Coissac E."/>
            <person name="Vachiery N."/>
            <person name="Demaille J."/>
            <person name="Martinez D."/>
        </authorList>
    </citation>
    <scope>NUCLEOTIDE SEQUENCE [LARGE SCALE GENOMIC DNA]</scope>
    <source>
        <strain>Gardel</strain>
    </source>
</reference>
<dbReference type="EMBL" id="CR925677">
    <property type="protein sequence ID" value="CAI27572.1"/>
    <property type="molecule type" value="Genomic_DNA"/>
</dbReference>
<dbReference type="RefSeq" id="WP_011154812.1">
    <property type="nucleotide sequence ID" value="NC_006831.1"/>
</dbReference>
<dbReference type="SMR" id="Q5FFB2"/>
<dbReference type="GeneID" id="33058371"/>
<dbReference type="KEGG" id="erg:ERGA_CDS_01200"/>
<dbReference type="HOGENOM" id="CLU_108412_0_1_5"/>
<dbReference type="OrthoDB" id="9807461at2"/>
<dbReference type="Proteomes" id="UP000000533">
    <property type="component" value="Chromosome"/>
</dbReference>
<dbReference type="GO" id="GO:0005524">
    <property type="term" value="F:ATP binding"/>
    <property type="evidence" value="ECO:0007669"/>
    <property type="project" value="UniProtKB-KW"/>
</dbReference>
<dbReference type="GO" id="GO:0003677">
    <property type="term" value="F:DNA binding"/>
    <property type="evidence" value="ECO:0007669"/>
    <property type="project" value="UniProtKB-KW"/>
</dbReference>
<dbReference type="GO" id="GO:0008270">
    <property type="term" value="F:zinc ion binding"/>
    <property type="evidence" value="ECO:0007669"/>
    <property type="project" value="UniProtKB-UniRule"/>
</dbReference>
<dbReference type="GO" id="GO:0045892">
    <property type="term" value="P:negative regulation of DNA-templated transcription"/>
    <property type="evidence" value="ECO:0007669"/>
    <property type="project" value="UniProtKB-UniRule"/>
</dbReference>
<dbReference type="HAMAP" id="MF_00440">
    <property type="entry name" value="NrdR"/>
    <property type="match status" value="1"/>
</dbReference>
<dbReference type="InterPro" id="IPR005144">
    <property type="entry name" value="ATP-cone_dom"/>
</dbReference>
<dbReference type="InterPro" id="IPR055173">
    <property type="entry name" value="NrdR-like_N"/>
</dbReference>
<dbReference type="InterPro" id="IPR003796">
    <property type="entry name" value="RNR_NrdR-like"/>
</dbReference>
<dbReference type="NCBIfam" id="TIGR00244">
    <property type="entry name" value="transcriptional regulator NrdR"/>
    <property type="match status" value="1"/>
</dbReference>
<dbReference type="PANTHER" id="PTHR30455">
    <property type="entry name" value="TRANSCRIPTIONAL REPRESSOR NRDR"/>
    <property type="match status" value="1"/>
</dbReference>
<dbReference type="PANTHER" id="PTHR30455:SF2">
    <property type="entry name" value="TRANSCRIPTIONAL REPRESSOR NRDR"/>
    <property type="match status" value="1"/>
</dbReference>
<dbReference type="Pfam" id="PF03477">
    <property type="entry name" value="ATP-cone"/>
    <property type="match status" value="1"/>
</dbReference>
<dbReference type="Pfam" id="PF22811">
    <property type="entry name" value="Zn_ribbon_NrdR"/>
    <property type="match status" value="1"/>
</dbReference>
<dbReference type="PROSITE" id="PS51161">
    <property type="entry name" value="ATP_CONE"/>
    <property type="match status" value="1"/>
</dbReference>
<organism>
    <name type="scientific">Ehrlichia ruminantium (strain Gardel)</name>
    <dbReference type="NCBI Taxonomy" id="302409"/>
    <lineage>
        <taxon>Bacteria</taxon>
        <taxon>Pseudomonadati</taxon>
        <taxon>Pseudomonadota</taxon>
        <taxon>Alphaproteobacteria</taxon>
        <taxon>Rickettsiales</taxon>
        <taxon>Anaplasmataceae</taxon>
        <taxon>Ehrlichia</taxon>
    </lineage>
</organism>
<protein>
    <recommendedName>
        <fullName evidence="1">Transcriptional repressor NrdR</fullName>
    </recommendedName>
</protein>
<comment type="function">
    <text evidence="1">Negatively regulates transcription of bacterial ribonucleotide reductase nrd genes and operons by binding to NrdR-boxes.</text>
</comment>
<comment type="cofactor">
    <cofactor evidence="1">
        <name>Zn(2+)</name>
        <dbReference type="ChEBI" id="CHEBI:29105"/>
    </cofactor>
    <text evidence="1">Binds 1 zinc ion.</text>
</comment>
<comment type="similarity">
    <text evidence="1">Belongs to the NrdR family.</text>
</comment>
<accession>Q5FFB2</accession>
<keyword id="KW-0067">ATP-binding</keyword>
<keyword id="KW-0238">DNA-binding</keyword>
<keyword id="KW-0479">Metal-binding</keyword>
<keyword id="KW-0547">Nucleotide-binding</keyword>
<keyword id="KW-0678">Repressor</keyword>
<keyword id="KW-0804">Transcription</keyword>
<keyword id="KW-0805">Transcription regulation</keyword>
<keyword id="KW-0862">Zinc</keyword>
<keyword id="KW-0863">Zinc-finger</keyword>
<sequence>MKCPFCNNISTNVKDSRSIEDDMLIRRRRVCPVCNSRFTTTEKLLLRSLMVIKKNGGLEQFDKKKLLSSILIATKKRPVSHDKINMMVNNIFYELEGKKDNAIPTDVIGKMVMDNLFKLDKVAYVRFASVYMNFKNINDFSNIIAKIINENNL</sequence>
<feature type="chain" id="PRO_0000230868" description="Transcriptional repressor NrdR">
    <location>
        <begin position="1"/>
        <end position="153"/>
    </location>
</feature>
<feature type="domain" description="ATP-cone" evidence="1">
    <location>
        <begin position="49"/>
        <end position="139"/>
    </location>
</feature>
<feature type="zinc finger region" evidence="1">
    <location>
        <begin position="3"/>
        <end position="34"/>
    </location>
</feature>
<proteinExistence type="inferred from homology"/>
<name>NRDR_EHRRG</name>